<accession>Q6MMY3</accession>
<gene>
    <name evidence="1" type="primary">ybeY</name>
    <name type="ordered locus">Bd1487</name>
</gene>
<keyword id="KW-0963">Cytoplasm</keyword>
<keyword id="KW-0255">Endonuclease</keyword>
<keyword id="KW-0378">Hydrolase</keyword>
<keyword id="KW-0479">Metal-binding</keyword>
<keyword id="KW-0540">Nuclease</keyword>
<keyword id="KW-1185">Reference proteome</keyword>
<keyword id="KW-0690">Ribosome biogenesis</keyword>
<keyword id="KW-0698">rRNA processing</keyword>
<keyword id="KW-0862">Zinc</keyword>
<comment type="function">
    <text evidence="1">Single strand-specific metallo-endoribonuclease involved in late-stage 70S ribosome quality control and in maturation of the 3' terminus of the 16S rRNA.</text>
</comment>
<comment type="cofactor">
    <cofactor evidence="1">
        <name>Zn(2+)</name>
        <dbReference type="ChEBI" id="CHEBI:29105"/>
    </cofactor>
    <text evidence="1">Binds 1 zinc ion.</text>
</comment>
<comment type="subcellular location">
    <subcellularLocation>
        <location evidence="1">Cytoplasm</location>
    </subcellularLocation>
</comment>
<comment type="similarity">
    <text evidence="1">Belongs to the endoribonuclease YbeY family.</text>
</comment>
<reference key="1">
    <citation type="journal article" date="2004" name="Science">
        <title>A predator unmasked: life cycle of Bdellovibrio bacteriovorus from a genomic perspective.</title>
        <authorList>
            <person name="Rendulic S."/>
            <person name="Jagtap P."/>
            <person name="Rosinus A."/>
            <person name="Eppinger M."/>
            <person name="Baar C."/>
            <person name="Lanz C."/>
            <person name="Keller H."/>
            <person name="Lambert C."/>
            <person name="Evans K.J."/>
            <person name="Goesmann A."/>
            <person name="Meyer F."/>
            <person name="Sockett R.E."/>
            <person name="Schuster S.C."/>
        </authorList>
    </citation>
    <scope>NUCLEOTIDE SEQUENCE [LARGE SCALE GENOMIC DNA]</scope>
    <source>
        <strain>ATCC 15356 / DSM 50701 / NCIMB 9529 / HD100</strain>
    </source>
</reference>
<organism>
    <name type="scientific">Bdellovibrio bacteriovorus (strain ATCC 15356 / DSM 50701 / NCIMB 9529 / HD100)</name>
    <dbReference type="NCBI Taxonomy" id="264462"/>
    <lineage>
        <taxon>Bacteria</taxon>
        <taxon>Pseudomonadati</taxon>
        <taxon>Bdellovibrionota</taxon>
        <taxon>Bdellovibrionia</taxon>
        <taxon>Bdellovibrionales</taxon>
        <taxon>Pseudobdellovibrionaceae</taxon>
        <taxon>Bdellovibrio</taxon>
    </lineage>
</organism>
<name>YBEY_BDEBA</name>
<dbReference type="EC" id="3.1.-.-" evidence="1"/>
<dbReference type="EMBL" id="BX842650">
    <property type="protein sequence ID" value="CAE79370.1"/>
    <property type="molecule type" value="Genomic_DNA"/>
</dbReference>
<dbReference type="RefSeq" id="WP_011163972.1">
    <property type="nucleotide sequence ID" value="NC_005363.1"/>
</dbReference>
<dbReference type="SMR" id="Q6MMY3"/>
<dbReference type="STRING" id="264462.Bd1487"/>
<dbReference type="GeneID" id="93012489"/>
<dbReference type="KEGG" id="bba:Bd1487"/>
<dbReference type="eggNOG" id="COG0319">
    <property type="taxonomic scope" value="Bacteria"/>
</dbReference>
<dbReference type="HOGENOM" id="CLU_106710_3_3_7"/>
<dbReference type="Proteomes" id="UP000008080">
    <property type="component" value="Chromosome"/>
</dbReference>
<dbReference type="GO" id="GO:0005737">
    <property type="term" value="C:cytoplasm"/>
    <property type="evidence" value="ECO:0007669"/>
    <property type="project" value="UniProtKB-SubCell"/>
</dbReference>
<dbReference type="GO" id="GO:0004222">
    <property type="term" value="F:metalloendopeptidase activity"/>
    <property type="evidence" value="ECO:0007669"/>
    <property type="project" value="InterPro"/>
</dbReference>
<dbReference type="GO" id="GO:0004521">
    <property type="term" value="F:RNA endonuclease activity"/>
    <property type="evidence" value="ECO:0007669"/>
    <property type="project" value="UniProtKB-UniRule"/>
</dbReference>
<dbReference type="GO" id="GO:0008270">
    <property type="term" value="F:zinc ion binding"/>
    <property type="evidence" value="ECO:0007669"/>
    <property type="project" value="UniProtKB-UniRule"/>
</dbReference>
<dbReference type="GO" id="GO:0006364">
    <property type="term" value="P:rRNA processing"/>
    <property type="evidence" value="ECO:0007669"/>
    <property type="project" value="UniProtKB-UniRule"/>
</dbReference>
<dbReference type="Gene3D" id="3.40.390.30">
    <property type="entry name" value="Metalloproteases ('zincins'), catalytic domain"/>
    <property type="match status" value="1"/>
</dbReference>
<dbReference type="HAMAP" id="MF_00009">
    <property type="entry name" value="Endoribonucl_YbeY"/>
    <property type="match status" value="1"/>
</dbReference>
<dbReference type="InterPro" id="IPR023091">
    <property type="entry name" value="MetalPrtase_cat_dom_sf_prd"/>
</dbReference>
<dbReference type="InterPro" id="IPR002036">
    <property type="entry name" value="YbeY"/>
</dbReference>
<dbReference type="InterPro" id="IPR020549">
    <property type="entry name" value="YbeY_CS"/>
</dbReference>
<dbReference type="NCBIfam" id="TIGR00043">
    <property type="entry name" value="rRNA maturation RNase YbeY"/>
    <property type="match status" value="1"/>
</dbReference>
<dbReference type="PANTHER" id="PTHR46986">
    <property type="entry name" value="ENDORIBONUCLEASE YBEY, CHLOROPLASTIC"/>
    <property type="match status" value="1"/>
</dbReference>
<dbReference type="PANTHER" id="PTHR46986:SF1">
    <property type="entry name" value="ENDORIBONUCLEASE YBEY, CHLOROPLASTIC"/>
    <property type="match status" value="1"/>
</dbReference>
<dbReference type="Pfam" id="PF02130">
    <property type="entry name" value="YbeY"/>
    <property type="match status" value="1"/>
</dbReference>
<dbReference type="SUPFAM" id="SSF55486">
    <property type="entry name" value="Metalloproteases ('zincins'), catalytic domain"/>
    <property type="match status" value="1"/>
</dbReference>
<dbReference type="PROSITE" id="PS01306">
    <property type="entry name" value="UPF0054"/>
    <property type="match status" value="1"/>
</dbReference>
<feature type="chain" id="PRO_0000102415" description="Endoribonuclease YbeY">
    <location>
        <begin position="1"/>
        <end position="150"/>
    </location>
</feature>
<feature type="binding site" evidence="1">
    <location>
        <position position="112"/>
    </location>
    <ligand>
        <name>Zn(2+)</name>
        <dbReference type="ChEBI" id="CHEBI:29105"/>
        <note>catalytic</note>
    </ligand>
</feature>
<feature type="binding site" evidence="1">
    <location>
        <position position="116"/>
    </location>
    <ligand>
        <name>Zn(2+)</name>
        <dbReference type="ChEBI" id="CHEBI:29105"/>
        <note>catalytic</note>
    </ligand>
</feature>
<feature type="binding site" evidence="1">
    <location>
        <position position="122"/>
    </location>
    <ligand>
        <name>Zn(2+)</name>
        <dbReference type="ChEBI" id="CHEBI:29105"/>
        <note>catalytic</note>
    </ligand>
</feature>
<evidence type="ECO:0000255" key="1">
    <source>
        <dbReference type="HAMAP-Rule" id="MF_00009"/>
    </source>
</evidence>
<proteinExistence type="inferred from homology"/>
<protein>
    <recommendedName>
        <fullName evidence="1">Endoribonuclease YbeY</fullName>
        <ecNumber evidence="1">3.1.-.-</ecNumber>
    </recommendedName>
</protein>
<sequence>MEVLIVNESKHAAPRKFIQTWMQLVVTELKRKKVLKAEQARRELTLVFLDKKPAQKINMEFRGKNYATDVLSFDSMDPGSLGELVLCPEVLKRQSKEHGLTYQQELGYMLLHGVLHLLGYDHETSEAEALEMFGIQDAAFEVLLKKVSAK</sequence>